<proteinExistence type="inferred from homology"/>
<feature type="chain" id="PRO_0000124254" description="Small ribosomal subunit protein uS7">
    <location>
        <begin position="1"/>
        <end position="155"/>
    </location>
</feature>
<organism>
    <name type="scientific">Corynebacterium glutamicum (strain ATCC 13032 / DSM 20300 / JCM 1318 / BCRC 11384 / CCUG 27702 / LMG 3730 / NBRC 12168 / NCIMB 10025 / NRRL B-2784 / 534)</name>
    <dbReference type="NCBI Taxonomy" id="196627"/>
    <lineage>
        <taxon>Bacteria</taxon>
        <taxon>Bacillati</taxon>
        <taxon>Actinomycetota</taxon>
        <taxon>Actinomycetes</taxon>
        <taxon>Mycobacteriales</taxon>
        <taxon>Corynebacteriaceae</taxon>
        <taxon>Corynebacterium</taxon>
    </lineage>
</organism>
<reference key="1">
    <citation type="journal article" date="2003" name="Appl. Microbiol. Biotechnol.">
        <title>The Corynebacterium glutamicum genome: features and impacts on biotechnological processes.</title>
        <authorList>
            <person name="Ikeda M."/>
            <person name="Nakagawa S."/>
        </authorList>
    </citation>
    <scope>NUCLEOTIDE SEQUENCE [LARGE SCALE GENOMIC DNA]</scope>
    <source>
        <strain>ATCC 13032 / DSM 20300 / JCM 1318 / BCRC 11384 / CCUG 27702 / LMG 3730 / NBRC 12168 / NCIMB 10025 / NRRL B-2784 / 534</strain>
    </source>
</reference>
<reference key="2">
    <citation type="journal article" date="2003" name="J. Biotechnol.">
        <title>The complete Corynebacterium glutamicum ATCC 13032 genome sequence and its impact on the production of L-aspartate-derived amino acids and vitamins.</title>
        <authorList>
            <person name="Kalinowski J."/>
            <person name="Bathe B."/>
            <person name="Bartels D."/>
            <person name="Bischoff N."/>
            <person name="Bott M."/>
            <person name="Burkovski A."/>
            <person name="Dusch N."/>
            <person name="Eggeling L."/>
            <person name="Eikmanns B.J."/>
            <person name="Gaigalat L."/>
            <person name="Goesmann A."/>
            <person name="Hartmann M."/>
            <person name="Huthmacher K."/>
            <person name="Kraemer R."/>
            <person name="Linke B."/>
            <person name="McHardy A.C."/>
            <person name="Meyer F."/>
            <person name="Moeckel B."/>
            <person name="Pfefferle W."/>
            <person name="Puehler A."/>
            <person name="Rey D.A."/>
            <person name="Rueckert C."/>
            <person name="Rupp O."/>
            <person name="Sahm H."/>
            <person name="Wendisch V.F."/>
            <person name="Wiegraebe I."/>
            <person name="Tauch A."/>
        </authorList>
    </citation>
    <scope>NUCLEOTIDE SEQUENCE [LARGE SCALE GENOMIC DNA]</scope>
    <source>
        <strain>ATCC 13032 / DSM 20300 / JCM 1318 / BCRC 11384 / CCUG 27702 / LMG 3730 / NBRC 12168 / NCIMB 10025 / NRRL B-2784 / 534</strain>
    </source>
</reference>
<comment type="function">
    <text evidence="1">One of the primary rRNA binding proteins, it binds directly to 16S rRNA where it nucleates assembly of the head domain of the 30S subunit. Is located at the subunit interface close to the decoding center, probably blocks exit of the E-site tRNA.</text>
</comment>
<comment type="subunit">
    <text evidence="1">Part of the 30S ribosomal subunit. Contacts proteins S9 and S11.</text>
</comment>
<comment type="similarity">
    <text evidence="1">Belongs to the universal ribosomal protein uS7 family.</text>
</comment>
<sequence length="155" mass="17481">MRKSAAPKRPVVQDPVYKSELVTQLVNKILIGGKKSTAERIVYGALEICREKTGTDPVGTLEKALGNVRPDLEVRSRRVGGATYQVPVDVRPERANTLALRWLVTFTRQRRENTMIERLANELLDAANGLGASVKRREDTHKMAEANRAFAHYRW</sequence>
<accession>Q8NT20</accession>
<gene>
    <name evidence="1" type="primary">rpsG</name>
    <name type="ordered locus">Cgl0494</name>
    <name type="ordered locus">cg0582</name>
</gene>
<dbReference type="EMBL" id="BA000036">
    <property type="protein sequence ID" value="BAB97887.1"/>
    <property type="molecule type" value="Genomic_DNA"/>
</dbReference>
<dbReference type="EMBL" id="BX927149">
    <property type="protein sequence ID" value="CAF19208.1"/>
    <property type="molecule type" value="Genomic_DNA"/>
</dbReference>
<dbReference type="RefSeq" id="NP_599739.1">
    <property type="nucleotide sequence ID" value="NC_003450.3"/>
</dbReference>
<dbReference type="RefSeq" id="WP_003854222.1">
    <property type="nucleotide sequence ID" value="NC_006958.1"/>
</dbReference>
<dbReference type="SMR" id="Q8NT20"/>
<dbReference type="STRING" id="196627.cg0582"/>
<dbReference type="GeneID" id="1021500"/>
<dbReference type="KEGG" id="cgb:cg0582"/>
<dbReference type="KEGG" id="cgl:Cgl0494"/>
<dbReference type="PATRIC" id="fig|196627.13.peg.493"/>
<dbReference type="eggNOG" id="COG0049">
    <property type="taxonomic scope" value="Bacteria"/>
</dbReference>
<dbReference type="HOGENOM" id="CLU_072226_1_1_11"/>
<dbReference type="OrthoDB" id="9807653at2"/>
<dbReference type="BioCyc" id="CORYNE:G18NG-10056-MONOMER"/>
<dbReference type="Proteomes" id="UP000000582">
    <property type="component" value="Chromosome"/>
</dbReference>
<dbReference type="Proteomes" id="UP000001009">
    <property type="component" value="Chromosome"/>
</dbReference>
<dbReference type="GO" id="GO:0015935">
    <property type="term" value="C:small ribosomal subunit"/>
    <property type="evidence" value="ECO:0007669"/>
    <property type="project" value="InterPro"/>
</dbReference>
<dbReference type="GO" id="GO:0019843">
    <property type="term" value="F:rRNA binding"/>
    <property type="evidence" value="ECO:0007669"/>
    <property type="project" value="UniProtKB-UniRule"/>
</dbReference>
<dbReference type="GO" id="GO:0003735">
    <property type="term" value="F:structural constituent of ribosome"/>
    <property type="evidence" value="ECO:0007669"/>
    <property type="project" value="InterPro"/>
</dbReference>
<dbReference type="GO" id="GO:0000049">
    <property type="term" value="F:tRNA binding"/>
    <property type="evidence" value="ECO:0007669"/>
    <property type="project" value="UniProtKB-UniRule"/>
</dbReference>
<dbReference type="GO" id="GO:0006412">
    <property type="term" value="P:translation"/>
    <property type="evidence" value="ECO:0007669"/>
    <property type="project" value="UniProtKB-UniRule"/>
</dbReference>
<dbReference type="CDD" id="cd14869">
    <property type="entry name" value="uS7_Bacteria"/>
    <property type="match status" value="1"/>
</dbReference>
<dbReference type="FunFam" id="1.10.455.10:FF:000001">
    <property type="entry name" value="30S ribosomal protein S7"/>
    <property type="match status" value="1"/>
</dbReference>
<dbReference type="Gene3D" id="1.10.455.10">
    <property type="entry name" value="Ribosomal protein S7 domain"/>
    <property type="match status" value="1"/>
</dbReference>
<dbReference type="HAMAP" id="MF_00480_B">
    <property type="entry name" value="Ribosomal_uS7_B"/>
    <property type="match status" value="1"/>
</dbReference>
<dbReference type="InterPro" id="IPR000235">
    <property type="entry name" value="Ribosomal_uS7"/>
</dbReference>
<dbReference type="InterPro" id="IPR005717">
    <property type="entry name" value="Ribosomal_uS7_bac/org-type"/>
</dbReference>
<dbReference type="InterPro" id="IPR020606">
    <property type="entry name" value="Ribosomal_uS7_CS"/>
</dbReference>
<dbReference type="InterPro" id="IPR023798">
    <property type="entry name" value="Ribosomal_uS7_dom"/>
</dbReference>
<dbReference type="InterPro" id="IPR036823">
    <property type="entry name" value="Ribosomal_uS7_dom_sf"/>
</dbReference>
<dbReference type="NCBIfam" id="TIGR01029">
    <property type="entry name" value="rpsG_bact"/>
    <property type="match status" value="1"/>
</dbReference>
<dbReference type="PANTHER" id="PTHR11205">
    <property type="entry name" value="RIBOSOMAL PROTEIN S7"/>
    <property type="match status" value="1"/>
</dbReference>
<dbReference type="Pfam" id="PF00177">
    <property type="entry name" value="Ribosomal_S7"/>
    <property type="match status" value="1"/>
</dbReference>
<dbReference type="PIRSF" id="PIRSF002122">
    <property type="entry name" value="RPS7p_RPS7a_RPS5e_RPS7o"/>
    <property type="match status" value="1"/>
</dbReference>
<dbReference type="SUPFAM" id="SSF47973">
    <property type="entry name" value="Ribosomal protein S7"/>
    <property type="match status" value="1"/>
</dbReference>
<dbReference type="PROSITE" id="PS00052">
    <property type="entry name" value="RIBOSOMAL_S7"/>
    <property type="match status" value="1"/>
</dbReference>
<name>RS7_CORGL</name>
<keyword id="KW-1185">Reference proteome</keyword>
<keyword id="KW-0687">Ribonucleoprotein</keyword>
<keyword id="KW-0689">Ribosomal protein</keyword>
<keyword id="KW-0694">RNA-binding</keyword>
<keyword id="KW-0699">rRNA-binding</keyword>
<keyword id="KW-0820">tRNA-binding</keyword>
<evidence type="ECO:0000255" key="1">
    <source>
        <dbReference type="HAMAP-Rule" id="MF_00480"/>
    </source>
</evidence>
<evidence type="ECO:0000305" key="2"/>
<protein>
    <recommendedName>
        <fullName evidence="1">Small ribosomal subunit protein uS7</fullName>
    </recommendedName>
    <alternativeName>
        <fullName evidence="2">30S ribosomal protein S7</fullName>
    </alternativeName>
</protein>